<proteinExistence type="evidence at transcript level"/>
<accession>Q23049</accession>
<reference evidence="12" key="1">
    <citation type="journal article" date="1998" name="Science">
        <title>Genome sequence of the nematode C. elegans: a platform for investigating biology.</title>
        <authorList>
            <consortium name="The C. elegans sequencing consortium"/>
        </authorList>
    </citation>
    <scope>NUCLEOTIDE SEQUENCE [LARGE SCALE GENOMIC DNA]</scope>
    <source>
        <strain evidence="12">Bristol N2</strain>
    </source>
</reference>
<reference evidence="11" key="2">
    <citation type="journal article" date="2003" name="Nature">
        <title>Basal body dysfunction is a likely cause of pleiotropic Bardet-Biedl syndrome.</title>
        <authorList>
            <person name="Ansley S.J."/>
            <person name="Badano J.L."/>
            <person name="Blacque O.E."/>
            <person name="Hill J."/>
            <person name="Hoskins B.E."/>
            <person name="Leitch C.C."/>
            <person name="Kim J.C."/>
            <person name="Ross A.J."/>
            <person name="Eichers E.R."/>
            <person name="Teslovich T.M."/>
            <person name="Mah A.K."/>
            <person name="Johnsen R.C."/>
            <person name="Cavender J.C."/>
            <person name="Lewis R.A."/>
            <person name="Leroux M.R."/>
            <person name="Beales P.L."/>
            <person name="Katsanis N."/>
        </authorList>
    </citation>
    <scope>TISSUE SPECIFICITY</scope>
    <scope>DEVELOPMENTAL STAGE</scope>
</reference>
<reference evidence="11" key="3">
    <citation type="journal article" date="2004" name="Genes Dev.">
        <title>Loss of C. elegans BBS-7 and BBS-8 protein function results in cilia defects and compromised intraflagellar transport.</title>
        <authorList>
            <person name="Blacque O.E."/>
            <person name="Reardon M.J."/>
            <person name="Li C."/>
            <person name="McCarthy J."/>
            <person name="Mahjoub M.R."/>
            <person name="Ansley S.J."/>
            <person name="Badano J.L."/>
            <person name="Mah A.K."/>
            <person name="Beales P.L."/>
            <person name="Davidson W.S."/>
            <person name="Johnsen R.C."/>
            <person name="Audeh M."/>
            <person name="Plasterk R.H."/>
            <person name="Baillie D.L."/>
            <person name="Katsanis N."/>
            <person name="Quarmby L.M."/>
            <person name="Wicks S.R."/>
            <person name="Leroux M.R."/>
        </authorList>
    </citation>
    <scope>FUNCTION</scope>
    <scope>SUBCELLULAR LOCATION</scope>
    <scope>TISSUE SPECIFICITY</scope>
    <scope>DISRUPTION PHENOTYPE</scope>
</reference>
<reference key="4">
    <citation type="journal article" date="2006" name="J. Cell Biol.">
        <title>Mechanism of transport of IFT particles in C. elegans cilia by the concerted action of kinesin-II and OSM-3 motors.</title>
        <authorList>
            <person name="Pan X."/>
            <person name="Ou G."/>
            <person name="Civelekoglu-Scholey G."/>
            <person name="Blacque O.E."/>
            <person name="Endres N.F."/>
            <person name="Tao L."/>
            <person name="Mogilner A."/>
            <person name="Leroux M.R."/>
            <person name="Vale R.D."/>
            <person name="Scholey J.M."/>
        </authorList>
    </citation>
    <scope>FUNCTION</scope>
</reference>
<reference key="5">
    <citation type="journal article" date="2011" name="PLoS Genet.">
        <title>Mutations in a guanylate cyclase GCY-35/GCY-36 modify Bardet-Biedl syndrome-associated phenotypes in Caenorhabditis elegans.</title>
        <authorList>
            <person name="Mok C.A."/>
            <person name="Healey M.P."/>
            <person name="Shekhar T."/>
            <person name="Leroux M.R."/>
            <person name="Heon E."/>
            <person name="Zhen M."/>
        </authorList>
    </citation>
    <scope>FUNCTION</scope>
    <scope>DISRUPTION PHENOTYPE</scope>
</reference>
<reference key="6">
    <citation type="journal article" date="2012" name="Nat. Cell Biol.">
        <title>The BBSome controls IFT assembly and turnaround in cilia.</title>
        <authorList>
            <person name="Wei Q."/>
            <person name="Zhang Y."/>
            <person name="Li Y."/>
            <person name="Zhang Q."/>
            <person name="Ling K."/>
            <person name="Hu J."/>
        </authorList>
    </citation>
    <scope>FUNCTION</scope>
    <scope>DISRUPTION PHENOTYPE</scope>
</reference>
<reference key="7">
    <citation type="journal article" date="2014" name="J. Cell Sci.">
        <title>Ciliopathy proteins establish a bipartite signaling compartment in a C. elegans thermosensory neuron.</title>
        <authorList>
            <person name="Nguyen P.A."/>
            <person name="Liou W."/>
            <person name="Hall D.H."/>
            <person name="Leroux M.R."/>
        </authorList>
    </citation>
    <scope>FUNCTION</scope>
    <scope>SUBCELLULAR LOCATION</scope>
    <scope>TISSUE SPECIFICITY</scope>
    <scope>DISRUPTION PHENOTYPE</scope>
</reference>
<reference key="8">
    <citation type="journal article" date="2016" name="PLoS Genet.">
        <title>Whole-organism developmental expression profiling identifies rab-28 as a novel ciliary GTPase associated with the BBSome and intraflagellar transport.</title>
        <authorList>
            <person name="Jensen V.L."/>
            <person name="Carter S."/>
            <person name="Sanders A.A."/>
            <person name="Li C."/>
            <person name="Kennedy J."/>
            <person name="Timbers T.A."/>
            <person name="Cai J."/>
            <person name="Scheidel N."/>
            <person name="Kennedy B.N."/>
            <person name="Morin R.D."/>
            <person name="Leroux M.R."/>
            <person name="Blacque O.E."/>
        </authorList>
    </citation>
    <scope>FUNCTION</scope>
    <scope>DISRUPTION PHENOTYPE</scope>
</reference>
<protein>
    <recommendedName>
        <fullName evidence="1">Tetratricopeptide repeat protein 8</fullName>
    </recommendedName>
    <alternativeName>
        <fullName evidence="13">Bardet-Biedl syndrome 8 protein homolog</fullName>
    </alternativeName>
</protein>
<comment type="function">
    <text evidence="1 5 6 7 8 9 10">Component of the BBSome complex (By similarity). The BBSome complex is thought to function as a coat complex required for sorting of specific membrane proteins to the primary cilia (By similarity). The BBSome complex is required for ciliogenesis but is dispensable for centriolar satellite function (By similarity). Required for proper BBSome complex assembly and its ciliary localization (PubMed:22922713). Required for cilia biogenesis and both the assembly and movement of intraflagellar transport proteins along the ciliary axoneme (PubMed:15231740, PubMed:17000880, PubMed:22022287, PubMed:22922713, PubMed:27930654). Plays a role in guanylyl cyclase localization in the ring-like structures at the base of the finger compartment in AFD sensory neurons (PubMed:25335890).</text>
</comment>
<comment type="subunit">
    <text evidence="1">Part of BBSome complex, that contains at least bbs-1, bbs-2, bbs-4, bbs-5, osm-12, bbs-8/ttc-8 and bbs-9.</text>
</comment>
<comment type="subcellular location">
    <subcellularLocation>
        <location evidence="5 9">Cell projection</location>
        <location evidence="5 9">Cilium</location>
    </subcellularLocation>
    <subcellularLocation>
        <location evidence="5">Cytoplasm</location>
        <location evidence="5">Cytoskeleton</location>
        <location evidence="5">Cilium basal body</location>
    </subcellularLocation>
    <subcellularLocation>
        <location evidence="5">Cytoplasm</location>
        <location evidence="5">Cytoskeleton</location>
        <location evidence="5">Cilium axoneme</location>
    </subcellularLocation>
    <text evidence="9">Localized at the ciliary base and also in ring-like structures between the base of the AFD sensory neuron finger compartment and the dendritic membrane.</text>
</comment>
<comment type="tissue specificity">
    <text evidence="4 5 9">Expressed in head and tail neurons (PubMed:15231740). Expressed in ciliated male tail-neurons (PubMed:14520415). Expressed in thermosensory and CO(2) sensory AFD neurons (PubMed:25335890).</text>
</comment>
<comment type="developmental stage">
    <text evidence="4">Expressed from the embryonic stage to adulthood. Expressed in embryos from the 1.5-fold stage, with expression increasing to the 3-fold stage. Expressed in ciliated cells including amphid and both inner and outer labial neurons of the head at larval stages L1 and L2. Expressed in both phasmid neurons PHA and PHB in the tail and in the PDE sensory neuron in the mid-body at larval stage L3 and L4.</text>
</comment>
<comment type="disruption phenotype">
    <text evidence="5 7 8 9 10">Mutants have normal body morphology, but with reduced body length and width, delayed larval development and decreased roaming movements (PubMed:22022287). May exhibit defective chemotaxis tendencies (PubMed:15231740). Defective sensory cilia structure and function (PubMed:15231740, PubMed:22022287). This is characterized by increased accumulation and mislocalization of intraflagellar transport proteins and impaired movement of intraflagellar transport proteins such as rab-28 along the ciliary axoneme (PubMed:15231740, PubMed:27930654). Disrupted assembly of the BBSome complex at the base of the cilia (PubMed:22922713). Impaired localization of the guanylyl cyclase proteins, gcy-8, gcy-18 and gcy-23, within AFD sensory neurons, with accumulation along the dendrite as well as in the finger compartment of AFD neurons (PubMed:25335890). Thermotaxis defects and impaired tendencies to migrate to a food source (PubMed:25335890).</text>
</comment>
<sequence>MSGESVIEFTGFIKACRLFRENRLAEAEAVCTNLLRKNPLDQATWALKMQCLSDSTYVDELENEDMGLAETFLDQNVIAPNARPGTSFARPKTSAKGVNPILRPTTNAGRPLSGVVRPQSSFKSGSMDQAVRTARTAKTARAVSSTSARNMRLGTASMAAGADGEFVNLARLNIDKYAADPQVNRQLFEYVFYYLNDIRVAHQIAGTASKAAGFEDYYWKNQLAKCYLRLGMLQDATKQLQSSLEQKKLIETFALLSKAYNRVDQPMAALKTYSAGLEVFPENVTMLTGMARVQEALGEYDESVKLYKRVLDAESNNIEAIACVATTYYYGGKPELAMRYYRRILQMGVSSPELFLNIGLCCMAAQQFDFALSSILRAQSTMTDDVAADVWYNIGQILVDIGDLVSAARSFRIALSHDPDHSESLVNLGILKHREGKIDEARSLYSSATSKNPYMFEGNYNLGLVSFTQGKYHECRELIEKALAAFPEHEHCKKILNHLKPLYESI</sequence>
<organism evidence="12">
    <name type="scientific">Caenorhabditis elegans</name>
    <dbReference type="NCBI Taxonomy" id="6239"/>
    <lineage>
        <taxon>Eukaryota</taxon>
        <taxon>Metazoa</taxon>
        <taxon>Ecdysozoa</taxon>
        <taxon>Nematoda</taxon>
        <taxon>Chromadorea</taxon>
        <taxon>Rhabditida</taxon>
        <taxon>Rhabditina</taxon>
        <taxon>Rhabditomorpha</taxon>
        <taxon>Rhabditoidea</taxon>
        <taxon>Rhabditidae</taxon>
        <taxon>Peloderinae</taxon>
        <taxon>Caenorhabditis</taxon>
    </lineage>
</organism>
<dbReference type="EMBL" id="BX284605">
    <property type="protein sequence ID" value="CCD74239.1"/>
    <property type="molecule type" value="Genomic_DNA"/>
</dbReference>
<dbReference type="PIR" id="T29520">
    <property type="entry name" value="T29520"/>
</dbReference>
<dbReference type="RefSeq" id="NP_504711.2">
    <property type="nucleotide sequence ID" value="NM_072310.4"/>
</dbReference>
<dbReference type="SMR" id="Q23049"/>
<dbReference type="ComplexPortal" id="CPX-428">
    <property type="entry name" value="BBSome complex"/>
</dbReference>
<dbReference type="DIP" id="DIP-26481N"/>
<dbReference type="FunCoup" id="Q23049">
    <property type="interactions" value="879"/>
</dbReference>
<dbReference type="STRING" id="6239.T25F10.5.1"/>
<dbReference type="TCDB" id="3.A.33.1.2">
    <property type="family name" value="the bbsome complex (bbsome) family"/>
</dbReference>
<dbReference type="PaxDb" id="6239-T25F10.5"/>
<dbReference type="EnsemblMetazoa" id="T25F10.5.1">
    <property type="protein sequence ID" value="T25F10.5.1"/>
    <property type="gene ID" value="WBGene00000244"/>
</dbReference>
<dbReference type="GeneID" id="188904"/>
<dbReference type="KEGG" id="cel:CELE_T25F10.5"/>
<dbReference type="UCSC" id="T25F10.5">
    <property type="organism name" value="c. elegans"/>
</dbReference>
<dbReference type="AGR" id="WB:WBGene00000244"/>
<dbReference type="CTD" id="188904"/>
<dbReference type="WormBase" id="T25F10.5">
    <property type="protein sequence ID" value="CE31071"/>
    <property type="gene ID" value="WBGene00000244"/>
    <property type="gene designation" value="bbs-8"/>
</dbReference>
<dbReference type="eggNOG" id="KOG1129">
    <property type="taxonomic scope" value="Eukaryota"/>
</dbReference>
<dbReference type="GeneTree" id="ENSGT00940000156816"/>
<dbReference type="HOGENOM" id="CLU_025029_0_0_1"/>
<dbReference type="InParanoid" id="Q23049"/>
<dbReference type="OMA" id="QMGVNSA"/>
<dbReference type="OrthoDB" id="421121at2759"/>
<dbReference type="PhylomeDB" id="Q23049"/>
<dbReference type="Reactome" id="R-CEL-5620922">
    <property type="pathway name" value="BBSome-mediated cargo-targeting to cilium"/>
</dbReference>
<dbReference type="PRO" id="PR:Q23049"/>
<dbReference type="Proteomes" id="UP000001940">
    <property type="component" value="Chromosome V"/>
</dbReference>
<dbReference type="Bgee" id="WBGene00000244">
    <property type="expression patterns" value="Expressed in pharyngeal muscle cell (C elegans) and 3 other cell types or tissues"/>
</dbReference>
<dbReference type="GO" id="GO:0034464">
    <property type="term" value="C:BBSome"/>
    <property type="evidence" value="ECO:0000318"/>
    <property type="project" value="GO_Central"/>
</dbReference>
<dbReference type="GO" id="GO:0036064">
    <property type="term" value="C:ciliary basal body"/>
    <property type="evidence" value="ECO:0000314"/>
    <property type="project" value="MGI"/>
</dbReference>
<dbReference type="GO" id="GO:0097546">
    <property type="term" value="C:ciliary base"/>
    <property type="evidence" value="ECO:0000314"/>
    <property type="project" value="WormBase"/>
</dbReference>
<dbReference type="GO" id="GO:0005929">
    <property type="term" value="C:cilium"/>
    <property type="evidence" value="ECO:0000303"/>
    <property type="project" value="ComplexPortal"/>
</dbReference>
<dbReference type="GO" id="GO:0005737">
    <property type="term" value="C:cytoplasm"/>
    <property type="evidence" value="ECO:0007669"/>
    <property type="project" value="UniProtKB-KW"/>
</dbReference>
<dbReference type="GO" id="GO:0044292">
    <property type="term" value="C:dendrite terminus"/>
    <property type="evidence" value="ECO:0000314"/>
    <property type="project" value="WormBase"/>
</dbReference>
<dbReference type="GO" id="GO:0043005">
    <property type="term" value="C:neuron projection"/>
    <property type="evidence" value="ECO:0000314"/>
    <property type="project" value="BHF-UCL"/>
</dbReference>
<dbReference type="GO" id="GO:0097730">
    <property type="term" value="C:non-motile cilium"/>
    <property type="evidence" value="ECO:0000314"/>
    <property type="project" value="WormBase"/>
</dbReference>
<dbReference type="GO" id="GO:0006935">
    <property type="term" value="P:chemotaxis"/>
    <property type="evidence" value="ECO:0000315"/>
    <property type="project" value="WormBase"/>
</dbReference>
<dbReference type="GO" id="GO:0060271">
    <property type="term" value="P:cilium assembly"/>
    <property type="evidence" value="ECO:0000315"/>
    <property type="project" value="WormBase"/>
</dbReference>
<dbReference type="GO" id="GO:0042073">
    <property type="term" value="P:intraciliary transport"/>
    <property type="evidence" value="ECO:0000315"/>
    <property type="project" value="WormBase"/>
</dbReference>
<dbReference type="GO" id="GO:1905515">
    <property type="term" value="P:non-motile cilium assembly"/>
    <property type="evidence" value="ECO:0000270"/>
    <property type="project" value="BHF-UCL"/>
</dbReference>
<dbReference type="GO" id="GO:0008355">
    <property type="term" value="P:olfactory learning"/>
    <property type="evidence" value="ECO:0000315"/>
    <property type="project" value="WormBase"/>
</dbReference>
<dbReference type="GO" id="GO:1905798">
    <property type="term" value="P:positive regulation of intraciliary anterograde transport"/>
    <property type="evidence" value="ECO:0000315"/>
    <property type="project" value="UniProtKB"/>
</dbReference>
<dbReference type="GO" id="GO:1905801">
    <property type="term" value="P:positive regulation of intraciliary retrograde transport"/>
    <property type="evidence" value="ECO:0000315"/>
    <property type="project" value="UniProtKB"/>
</dbReference>
<dbReference type="GO" id="GO:1903569">
    <property type="term" value="P:positive regulation of protein localization to ciliary membrane"/>
    <property type="evidence" value="ECO:0000315"/>
    <property type="project" value="UniProtKB"/>
</dbReference>
<dbReference type="GO" id="GO:1904107">
    <property type="term" value="P:protein localization to microvillus membrane"/>
    <property type="evidence" value="ECO:0000315"/>
    <property type="project" value="WormBase"/>
</dbReference>
<dbReference type="GO" id="GO:0015031">
    <property type="term" value="P:protein transport"/>
    <property type="evidence" value="ECO:0007669"/>
    <property type="project" value="UniProtKB-KW"/>
</dbReference>
<dbReference type="CDD" id="cd21341">
    <property type="entry name" value="TTC8_N"/>
    <property type="match status" value="1"/>
</dbReference>
<dbReference type="FunFam" id="1.25.40.10:FF:000586">
    <property type="entry name" value="Bardet-Biedl syndrome 8"/>
    <property type="match status" value="1"/>
</dbReference>
<dbReference type="Gene3D" id="1.25.40.10">
    <property type="entry name" value="Tetratricopeptide repeat domain"/>
    <property type="match status" value="1"/>
</dbReference>
<dbReference type="InterPro" id="IPR028796">
    <property type="entry name" value="BBS8"/>
</dbReference>
<dbReference type="InterPro" id="IPR011990">
    <property type="entry name" value="TPR-like_helical_dom_sf"/>
</dbReference>
<dbReference type="InterPro" id="IPR019734">
    <property type="entry name" value="TPR_rpt"/>
</dbReference>
<dbReference type="PANTHER" id="PTHR44177">
    <property type="entry name" value="TETRATRICOPEPTIDE REPEAT PROTEIN 8"/>
    <property type="match status" value="1"/>
</dbReference>
<dbReference type="PANTHER" id="PTHR44177:SF1">
    <property type="entry name" value="TETRATRICOPEPTIDE REPEAT PROTEIN 8"/>
    <property type="match status" value="1"/>
</dbReference>
<dbReference type="Pfam" id="PF13432">
    <property type="entry name" value="TPR_16"/>
    <property type="match status" value="2"/>
</dbReference>
<dbReference type="Pfam" id="PF13181">
    <property type="entry name" value="TPR_8"/>
    <property type="match status" value="1"/>
</dbReference>
<dbReference type="SMART" id="SM00028">
    <property type="entry name" value="TPR"/>
    <property type="match status" value="7"/>
</dbReference>
<dbReference type="SUPFAM" id="SSF48452">
    <property type="entry name" value="TPR-like"/>
    <property type="match status" value="1"/>
</dbReference>
<dbReference type="PROSITE" id="PS50005">
    <property type="entry name" value="TPR"/>
    <property type="match status" value="7"/>
</dbReference>
<dbReference type="PROSITE" id="PS50293">
    <property type="entry name" value="TPR_REGION"/>
    <property type="match status" value="1"/>
</dbReference>
<feature type="chain" id="PRO_0000435001" description="Tetratricopeptide repeat protein 8" evidence="11">
    <location>
        <begin position="1"/>
        <end position="506"/>
    </location>
</feature>
<feature type="repeat" description="TPR 1" evidence="2">
    <location>
        <begin position="217"/>
        <end position="250"/>
    </location>
</feature>
<feature type="repeat" description="TPR 2" evidence="2">
    <location>
        <begin position="251"/>
        <end position="283"/>
    </location>
</feature>
<feature type="repeat" description="TPR 3" evidence="2">
    <location>
        <begin position="284"/>
        <end position="317"/>
    </location>
</feature>
<feature type="repeat" description="TPR 4" evidence="2">
    <location>
        <begin position="319"/>
        <end position="351"/>
    </location>
</feature>
<feature type="repeat" description="TPR 5" evidence="2">
    <location>
        <begin position="353"/>
        <end position="385"/>
    </location>
</feature>
<feature type="repeat" description="TPR 6" evidence="2">
    <location>
        <begin position="388"/>
        <end position="421"/>
    </location>
</feature>
<feature type="repeat" description="TPR 7" evidence="2">
    <location>
        <begin position="423"/>
        <end position="455"/>
    </location>
</feature>
<feature type="repeat" description="TPR 8" evidence="2">
    <location>
        <begin position="456"/>
        <end position="489"/>
    </location>
</feature>
<feature type="region of interest" description="Disordered" evidence="3">
    <location>
        <begin position="83"/>
        <end position="112"/>
    </location>
</feature>
<name>TTC8_CAEEL</name>
<evidence type="ECO:0000250" key="1">
    <source>
        <dbReference type="UniProtKB" id="Q8TAM2"/>
    </source>
</evidence>
<evidence type="ECO:0000255" key="2"/>
<evidence type="ECO:0000256" key="3">
    <source>
        <dbReference type="SAM" id="MobiDB-lite"/>
    </source>
</evidence>
<evidence type="ECO:0000269" key="4">
    <source>
    </source>
</evidence>
<evidence type="ECO:0000269" key="5">
    <source>
    </source>
</evidence>
<evidence type="ECO:0000269" key="6">
    <source>
    </source>
</evidence>
<evidence type="ECO:0000269" key="7">
    <source>
    </source>
</evidence>
<evidence type="ECO:0000269" key="8">
    <source>
    </source>
</evidence>
<evidence type="ECO:0000269" key="9">
    <source>
    </source>
</evidence>
<evidence type="ECO:0000269" key="10">
    <source>
    </source>
</evidence>
<evidence type="ECO:0000305" key="11"/>
<evidence type="ECO:0000312" key="12">
    <source>
        <dbReference type="Proteomes" id="UP000001940"/>
    </source>
</evidence>
<evidence type="ECO:0000312" key="13">
    <source>
        <dbReference type="WormBase" id="T25F10.5"/>
    </source>
</evidence>
<gene>
    <name evidence="13" type="primary">bbs-8</name>
    <name evidence="13" type="ORF">T25F10.5</name>
</gene>
<keyword id="KW-0966">Cell projection</keyword>
<keyword id="KW-0969">Cilium</keyword>
<keyword id="KW-0970">Cilium biogenesis/degradation</keyword>
<keyword id="KW-0963">Cytoplasm</keyword>
<keyword id="KW-0206">Cytoskeleton</keyword>
<keyword id="KW-0653">Protein transport</keyword>
<keyword id="KW-1185">Reference proteome</keyword>
<keyword id="KW-0677">Repeat</keyword>
<keyword id="KW-0802">TPR repeat</keyword>
<keyword id="KW-0813">Transport</keyword>